<organism>
    <name type="scientific">Pyricularia oryzae (strain 70-15 / ATCC MYA-4617 / FGSC 8958)</name>
    <name type="common">Rice blast fungus</name>
    <name type="synonym">Magnaporthe oryzae</name>
    <dbReference type="NCBI Taxonomy" id="242507"/>
    <lineage>
        <taxon>Eukaryota</taxon>
        <taxon>Fungi</taxon>
        <taxon>Dikarya</taxon>
        <taxon>Ascomycota</taxon>
        <taxon>Pezizomycotina</taxon>
        <taxon>Sordariomycetes</taxon>
        <taxon>Sordariomycetidae</taxon>
        <taxon>Magnaporthales</taxon>
        <taxon>Pyriculariaceae</taxon>
        <taxon>Pyricularia</taxon>
    </lineage>
</organism>
<proteinExistence type="inferred from homology"/>
<name>DBP7_PYRO7</name>
<dbReference type="EC" id="3.6.4.13"/>
<dbReference type="EMBL" id="CM001233">
    <property type="protein sequence ID" value="EHA52318.1"/>
    <property type="molecule type" value="Genomic_DNA"/>
</dbReference>
<dbReference type="RefSeq" id="XP_003712125.1">
    <property type="nucleotide sequence ID" value="XM_003712077.1"/>
</dbReference>
<dbReference type="SMR" id="A4QX49"/>
<dbReference type="FunCoup" id="A4QX49">
    <property type="interactions" value="738"/>
</dbReference>
<dbReference type="STRING" id="242507.A4QX49"/>
<dbReference type="EnsemblFungi" id="MGG_05810T0">
    <property type="protein sequence ID" value="MGG_05810T0"/>
    <property type="gene ID" value="MGG_05810"/>
</dbReference>
<dbReference type="GeneID" id="2684165"/>
<dbReference type="KEGG" id="mgr:MGG_05810"/>
<dbReference type="VEuPathDB" id="FungiDB:MGG_05810"/>
<dbReference type="eggNOG" id="KOG0348">
    <property type="taxonomic scope" value="Eukaryota"/>
</dbReference>
<dbReference type="HOGENOM" id="CLU_003041_26_2_1"/>
<dbReference type="InParanoid" id="A4QX49"/>
<dbReference type="OMA" id="AVHIKAD"/>
<dbReference type="OrthoDB" id="422663at2759"/>
<dbReference type="Proteomes" id="UP000009058">
    <property type="component" value="Chromosome 3"/>
</dbReference>
<dbReference type="GO" id="GO:0005730">
    <property type="term" value="C:nucleolus"/>
    <property type="evidence" value="ECO:0007669"/>
    <property type="project" value="UniProtKB-SubCell"/>
</dbReference>
<dbReference type="GO" id="GO:0005524">
    <property type="term" value="F:ATP binding"/>
    <property type="evidence" value="ECO:0007669"/>
    <property type="project" value="UniProtKB-KW"/>
</dbReference>
<dbReference type="GO" id="GO:0016887">
    <property type="term" value="F:ATP hydrolysis activity"/>
    <property type="evidence" value="ECO:0007669"/>
    <property type="project" value="RHEA"/>
</dbReference>
<dbReference type="GO" id="GO:0003723">
    <property type="term" value="F:RNA binding"/>
    <property type="evidence" value="ECO:0007669"/>
    <property type="project" value="UniProtKB-KW"/>
</dbReference>
<dbReference type="GO" id="GO:0003724">
    <property type="term" value="F:RNA helicase activity"/>
    <property type="evidence" value="ECO:0007669"/>
    <property type="project" value="UniProtKB-EC"/>
</dbReference>
<dbReference type="GO" id="GO:0000464">
    <property type="term" value="P:endonucleolytic cleavage in ITS1 upstream of 5.8S rRNA from tricistronic rRNA transcript (SSU-rRNA, 5.8S rRNA, LSU-rRNA)"/>
    <property type="evidence" value="ECO:0007669"/>
    <property type="project" value="EnsemblFungi"/>
</dbReference>
<dbReference type="CDD" id="cd17949">
    <property type="entry name" value="DEADc_DDX31"/>
    <property type="match status" value="1"/>
</dbReference>
<dbReference type="CDD" id="cd18787">
    <property type="entry name" value="SF2_C_DEAD"/>
    <property type="match status" value="1"/>
</dbReference>
<dbReference type="Gene3D" id="3.40.50.300">
    <property type="entry name" value="P-loop containing nucleotide triphosphate hydrolases"/>
    <property type="match status" value="2"/>
</dbReference>
<dbReference type="InterPro" id="IPR011545">
    <property type="entry name" value="DEAD/DEAH_box_helicase_dom"/>
</dbReference>
<dbReference type="InterPro" id="IPR014001">
    <property type="entry name" value="Helicase_ATP-bd"/>
</dbReference>
<dbReference type="InterPro" id="IPR001650">
    <property type="entry name" value="Helicase_C-like"/>
</dbReference>
<dbReference type="InterPro" id="IPR027417">
    <property type="entry name" value="P-loop_NTPase"/>
</dbReference>
<dbReference type="InterPro" id="IPR025313">
    <property type="entry name" value="SPB4-like_CTE"/>
</dbReference>
<dbReference type="PANTHER" id="PTHR24031">
    <property type="entry name" value="RNA HELICASE"/>
    <property type="match status" value="1"/>
</dbReference>
<dbReference type="Pfam" id="PF13959">
    <property type="entry name" value="CTE_SPB4"/>
    <property type="match status" value="1"/>
</dbReference>
<dbReference type="Pfam" id="PF00270">
    <property type="entry name" value="DEAD"/>
    <property type="match status" value="1"/>
</dbReference>
<dbReference type="Pfam" id="PF00271">
    <property type="entry name" value="Helicase_C"/>
    <property type="match status" value="1"/>
</dbReference>
<dbReference type="SMART" id="SM00487">
    <property type="entry name" value="DEXDc"/>
    <property type="match status" value="1"/>
</dbReference>
<dbReference type="SMART" id="SM01178">
    <property type="entry name" value="DUF4217"/>
    <property type="match status" value="1"/>
</dbReference>
<dbReference type="SMART" id="SM00490">
    <property type="entry name" value="HELICc"/>
    <property type="match status" value="1"/>
</dbReference>
<dbReference type="SUPFAM" id="SSF52540">
    <property type="entry name" value="P-loop containing nucleoside triphosphate hydrolases"/>
    <property type="match status" value="2"/>
</dbReference>
<dbReference type="PROSITE" id="PS51192">
    <property type="entry name" value="HELICASE_ATP_BIND_1"/>
    <property type="match status" value="1"/>
</dbReference>
<dbReference type="PROSITE" id="PS51194">
    <property type="entry name" value="HELICASE_CTER"/>
    <property type="match status" value="1"/>
</dbReference>
<dbReference type="PROSITE" id="PS51195">
    <property type="entry name" value="Q_MOTIF"/>
    <property type="match status" value="1"/>
</dbReference>
<keyword id="KW-0067">ATP-binding</keyword>
<keyword id="KW-0347">Helicase</keyword>
<keyword id="KW-0378">Hydrolase</keyword>
<keyword id="KW-0547">Nucleotide-binding</keyword>
<keyword id="KW-0539">Nucleus</keyword>
<keyword id="KW-1185">Reference proteome</keyword>
<keyword id="KW-0690">Ribosome biogenesis</keyword>
<keyword id="KW-0694">RNA-binding</keyword>
<keyword id="KW-0698">rRNA processing</keyword>
<feature type="chain" id="PRO_0000294643" description="ATP-dependent RNA helicase DBP7">
    <location>
        <begin position="1"/>
        <end position="825"/>
    </location>
</feature>
<feature type="domain" description="Helicase ATP-binding" evidence="2">
    <location>
        <begin position="164"/>
        <end position="373"/>
    </location>
</feature>
<feature type="domain" description="Helicase C-terminal" evidence="3">
    <location>
        <begin position="400"/>
        <end position="625"/>
    </location>
</feature>
<feature type="region of interest" description="Disordered" evidence="4">
    <location>
        <begin position="21"/>
        <end position="125"/>
    </location>
</feature>
<feature type="region of interest" description="Disordered" evidence="4">
    <location>
        <begin position="457"/>
        <end position="495"/>
    </location>
</feature>
<feature type="region of interest" description="Disordered" evidence="4">
    <location>
        <begin position="632"/>
        <end position="657"/>
    </location>
</feature>
<feature type="region of interest" description="Disordered" evidence="4">
    <location>
        <begin position="676"/>
        <end position="713"/>
    </location>
</feature>
<feature type="region of interest" description="Disordered" evidence="4">
    <location>
        <begin position="764"/>
        <end position="825"/>
    </location>
</feature>
<feature type="short sequence motif" description="Q motif">
    <location>
        <begin position="131"/>
        <end position="160"/>
    </location>
</feature>
<feature type="short sequence motif" description="DEAD box">
    <location>
        <begin position="302"/>
        <end position="305"/>
    </location>
</feature>
<feature type="compositionally biased region" description="Low complexity" evidence="4">
    <location>
        <begin position="49"/>
        <end position="60"/>
    </location>
</feature>
<feature type="compositionally biased region" description="Polar residues" evidence="4">
    <location>
        <begin position="83"/>
        <end position="102"/>
    </location>
</feature>
<feature type="compositionally biased region" description="Low complexity" evidence="4">
    <location>
        <begin position="109"/>
        <end position="125"/>
    </location>
</feature>
<feature type="compositionally biased region" description="Basic and acidic residues" evidence="4">
    <location>
        <begin position="470"/>
        <end position="487"/>
    </location>
</feature>
<feature type="compositionally biased region" description="Basic and acidic residues" evidence="4">
    <location>
        <begin position="646"/>
        <end position="655"/>
    </location>
</feature>
<feature type="compositionally biased region" description="Low complexity" evidence="4">
    <location>
        <begin position="676"/>
        <end position="686"/>
    </location>
</feature>
<feature type="compositionally biased region" description="Basic and acidic residues" evidence="4">
    <location>
        <begin position="786"/>
        <end position="796"/>
    </location>
</feature>
<feature type="binding site" evidence="2">
    <location>
        <begin position="177"/>
        <end position="184"/>
    </location>
    <ligand>
        <name>ATP</name>
        <dbReference type="ChEBI" id="CHEBI:30616"/>
    </ligand>
</feature>
<gene>
    <name type="primary">DBP7</name>
    <name type="ORF">MGG_05810</name>
</gene>
<evidence type="ECO:0000250" key="1"/>
<evidence type="ECO:0000255" key="2">
    <source>
        <dbReference type="PROSITE-ProRule" id="PRU00541"/>
    </source>
</evidence>
<evidence type="ECO:0000255" key="3">
    <source>
        <dbReference type="PROSITE-ProRule" id="PRU00542"/>
    </source>
</evidence>
<evidence type="ECO:0000256" key="4">
    <source>
        <dbReference type="SAM" id="MobiDB-lite"/>
    </source>
</evidence>
<evidence type="ECO:0000305" key="5"/>
<sequence length="825" mass="89217">MDDDGLLINFEVGEGPIKPQIKFTGGRWRERNRLQRSVKRGLTGSQSNDAVADDVGPAPAKRQRLSEGAAPEIQRRFRPQAQGPRSQHVSSRLFTSNPTPVTNFDEPETAPAEEPAEPALPSNAPLSDEAATFAALGLSRRIAQHLSAKLELKAPTAIQHRAVPHLVTTDEDAFLQAQTGSGKTLAYLLPIVNRILALNQNEDGTISKDASKKIHRNSGLLAIVLAPTRELCKQIATVLEKLLRCAPWIVSTTVIGGESKHSEKARIRKGINILIATPGRLKDHLDNTKVLDVSLARWLILDEGDRMMEMGFMDDLKEIVSKMREAPLKKINPDGIQLEPALPTRRVTVLCSATLDHAQVRRLGEYSLEADKTELIKVDGTEAAKEGDEASEAVFAAPSQLKQSYLVVPAKLRLVTLIALLKSSFARRGSVMKAIIFISCADSVDFHFDLLRSPIKEPKEAAAPPTPKKAPKDAGETPDTPPKETKPTKPVTNHTESTVGKACYITSAANTTITLHKLHGSLAQPVRTATLDSFSKSKDPSILITTDISSRGLDVPAVDLVIEYDPAFAVADHVHRIGRTARAGRPGKAVLFLQPGSEEGYVGLLQKNASTALTPQLYDSVLQAGFSSNIDLPPVTATNEDGQDTEQQKQLDSRKQTWTSRAEALQLHLEQRLLASDASSQASNNSGKGFNSKKGASTKLGKPAPKSSDGATGTLLASGRQAFRSHIRAYATHVRDERVYFDMTQLHLGHMAKAFGLREAPGGIGAGVQRRTVKPSAANGGGKKSTKGDDGDGLDKQDDDEAERTRRMKKMMRMVGAGASEFNIG</sequence>
<reference key="1">
    <citation type="journal article" date="2005" name="Nature">
        <title>The genome sequence of the rice blast fungus Magnaporthe grisea.</title>
        <authorList>
            <person name="Dean R.A."/>
            <person name="Talbot N.J."/>
            <person name="Ebbole D.J."/>
            <person name="Farman M.L."/>
            <person name="Mitchell T.K."/>
            <person name="Orbach M.J."/>
            <person name="Thon M.R."/>
            <person name="Kulkarni R."/>
            <person name="Xu J.-R."/>
            <person name="Pan H."/>
            <person name="Read N.D."/>
            <person name="Lee Y.-H."/>
            <person name="Carbone I."/>
            <person name="Brown D."/>
            <person name="Oh Y.Y."/>
            <person name="Donofrio N."/>
            <person name="Jeong J.S."/>
            <person name="Soanes D.M."/>
            <person name="Djonovic S."/>
            <person name="Kolomiets E."/>
            <person name="Rehmeyer C."/>
            <person name="Li W."/>
            <person name="Harding M."/>
            <person name="Kim S."/>
            <person name="Lebrun M.-H."/>
            <person name="Bohnert H."/>
            <person name="Coughlan S."/>
            <person name="Butler J."/>
            <person name="Calvo S.E."/>
            <person name="Ma L.-J."/>
            <person name="Nicol R."/>
            <person name="Purcell S."/>
            <person name="Nusbaum C."/>
            <person name="Galagan J.E."/>
            <person name="Birren B.W."/>
        </authorList>
    </citation>
    <scope>NUCLEOTIDE SEQUENCE [LARGE SCALE GENOMIC DNA]</scope>
    <source>
        <strain>70-15 / ATCC MYA-4617 / FGSC 8958</strain>
    </source>
</reference>
<protein>
    <recommendedName>
        <fullName>ATP-dependent RNA helicase DBP7</fullName>
        <ecNumber>3.6.4.13</ecNumber>
    </recommendedName>
</protein>
<comment type="function">
    <text evidence="1">ATP-binding RNA helicase involved in the biogenesis of 60S ribosomal subunits and is required for the normal formation of 25S and 5.8S rRNAs.</text>
</comment>
<comment type="catalytic activity">
    <reaction>
        <text>ATP + H2O = ADP + phosphate + H(+)</text>
        <dbReference type="Rhea" id="RHEA:13065"/>
        <dbReference type="ChEBI" id="CHEBI:15377"/>
        <dbReference type="ChEBI" id="CHEBI:15378"/>
        <dbReference type="ChEBI" id="CHEBI:30616"/>
        <dbReference type="ChEBI" id="CHEBI:43474"/>
        <dbReference type="ChEBI" id="CHEBI:456216"/>
        <dbReference type="EC" id="3.6.4.13"/>
    </reaction>
</comment>
<comment type="subcellular location">
    <subcellularLocation>
        <location evidence="1">Nucleus</location>
        <location evidence="1">Nucleolus</location>
    </subcellularLocation>
</comment>
<comment type="domain">
    <text>The Q motif is unique to and characteristic of the DEAD box family of RNA helicases and controls ATP binding and hydrolysis.</text>
</comment>
<comment type="miscellaneous">
    <text>Present with 1460 molecules/cell in log phase SD medium.</text>
</comment>
<comment type="similarity">
    <text evidence="5">Belongs to the DEAD box helicase family. DDX31/DBP7 subfamily.</text>
</comment>
<accession>A4QX49</accession>
<accession>G4N0I4</accession>